<dbReference type="EMBL" id="AP008232">
    <property type="protein sequence ID" value="BAE74384.1"/>
    <property type="molecule type" value="Genomic_DNA"/>
</dbReference>
<dbReference type="RefSeq" id="WP_011410743.1">
    <property type="nucleotide sequence ID" value="NC_007712.1"/>
</dbReference>
<dbReference type="SMR" id="Q2NTZ1"/>
<dbReference type="STRING" id="343509.SG1109"/>
<dbReference type="KEGG" id="sgl:SG1109"/>
<dbReference type="eggNOG" id="COG2834">
    <property type="taxonomic scope" value="Bacteria"/>
</dbReference>
<dbReference type="HOGENOM" id="CLU_087560_1_1_6"/>
<dbReference type="OrthoDB" id="9787361at2"/>
<dbReference type="BioCyc" id="SGLO343509:SGP1_RS09520-MONOMER"/>
<dbReference type="Proteomes" id="UP000001932">
    <property type="component" value="Chromosome"/>
</dbReference>
<dbReference type="GO" id="GO:0030288">
    <property type="term" value="C:outer membrane-bounded periplasmic space"/>
    <property type="evidence" value="ECO:0007669"/>
    <property type="project" value="TreeGrafter"/>
</dbReference>
<dbReference type="GO" id="GO:0044874">
    <property type="term" value="P:lipoprotein localization to outer membrane"/>
    <property type="evidence" value="ECO:0007669"/>
    <property type="project" value="UniProtKB-UniRule"/>
</dbReference>
<dbReference type="GO" id="GO:0042953">
    <property type="term" value="P:lipoprotein transport"/>
    <property type="evidence" value="ECO:0007669"/>
    <property type="project" value="InterPro"/>
</dbReference>
<dbReference type="CDD" id="cd16325">
    <property type="entry name" value="LolA"/>
    <property type="match status" value="1"/>
</dbReference>
<dbReference type="FunFam" id="2.50.20.10:FF:000001">
    <property type="entry name" value="Outer-membrane lipoprotein carrier protein"/>
    <property type="match status" value="1"/>
</dbReference>
<dbReference type="Gene3D" id="2.50.20.10">
    <property type="entry name" value="Lipoprotein localisation LolA/LolB/LppX"/>
    <property type="match status" value="1"/>
</dbReference>
<dbReference type="HAMAP" id="MF_00240">
    <property type="entry name" value="LolA"/>
    <property type="match status" value="1"/>
</dbReference>
<dbReference type="InterPro" id="IPR029046">
    <property type="entry name" value="LolA/LolB/LppX"/>
</dbReference>
<dbReference type="InterPro" id="IPR004564">
    <property type="entry name" value="OM_lipoprot_carrier_LolA-like"/>
</dbReference>
<dbReference type="InterPro" id="IPR018323">
    <property type="entry name" value="OM_lipoprot_carrier_LolA_Pbac"/>
</dbReference>
<dbReference type="NCBIfam" id="TIGR00547">
    <property type="entry name" value="lolA"/>
    <property type="match status" value="1"/>
</dbReference>
<dbReference type="PANTHER" id="PTHR35869">
    <property type="entry name" value="OUTER-MEMBRANE LIPOPROTEIN CARRIER PROTEIN"/>
    <property type="match status" value="1"/>
</dbReference>
<dbReference type="PANTHER" id="PTHR35869:SF1">
    <property type="entry name" value="OUTER-MEMBRANE LIPOPROTEIN CARRIER PROTEIN"/>
    <property type="match status" value="1"/>
</dbReference>
<dbReference type="Pfam" id="PF03548">
    <property type="entry name" value="LolA"/>
    <property type="match status" value="1"/>
</dbReference>
<dbReference type="SUPFAM" id="SSF89392">
    <property type="entry name" value="Prokaryotic lipoproteins and lipoprotein localization factors"/>
    <property type="match status" value="1"/>
</dbReference>
<organism>
    <name type="scientific">Sodalis glossinidius (strain morsitans)</name>
    <dbReference type="NCBI Taxonomy" id="343509"/>
    <lineage>
        <taxon>Bacteria</taxon>
        <taxon>Pseudomonadati</taxon>
        <taxon>Pseudomonadota</taxon>
        <taxon>Gammaproteobacteria</taxon>
        <taxon>Enterobacterales</taxon>
        <taxon>Bruguierivoracaceae</taxon>
        <taxon>Sodalis</taxon>
    </lineage>
</organism>
<accession>Q2NTZ1</accession>
<reference key="1">
    <citation type="journal article" date="2006" name="Genome Res.">
        <title>Massive genome erosion and functional adaptations provide insights into the symbiotic lifestyle of Sodalis glossinidius in the tsetse host.</title>
        <authorList>
            <person name="Toh H."/>
            <person name="Weiss B.L."/>
            <person name="Perkin S.A.H."/>
            <person name="Yamashita A."/>
            <person name="Oshima K."/>
            <person name="Hattori M."/>
            <person name="Aksoy S."/>
        </authorList>
    </citation>
    <scope>NUCLEOTIDE SEQUENCE [LARGE SCALE GENOMIC DNA]</scope>
    <source>
        <strain>morsitans</strain>
    </source>
</reference>
<comment type="function">
    <text evidence="1">Participates in the translocation of lipoproteins from the inner membrane to the outer membrane. Only forms a complex with a lipoprotein if the residue after the N-terminal Cys is not an aspartate (The Asp acts as a targeting signal to indicate that the lipoprotein should stay in the inner membrane).</text>
</comment>
<comment type="subunit">
    <text evidence="1">Monomer.</text>
</comment>
<comment type="subcellular location">
    <subcellularLocation>
        <location evidence="1">Periplasm</location>
    </subcellularLocation>
</comment>
<comment type="similarity">
    <text evidence="1">Belongs to the LolA family.</text>
</comment>
<evidence type="ECO:0000255" key="1">
    <source>
        <dbReference type="HAMAP-Rule" id="MF_00240"/>
    </source>
</evidence>
<sequence>MKKQLMTSCLFAAVLAAPAFAEDADVLQSRLNQVNSFHASFTQRVTGAEGGAVQEGEGELWIKRPNLFNWHMTTPDESVLVSDGKTLWFYNPFVEQAIANWLKNATGNTPFMLITRNSAADWGQYNVKQQGDSFSLVPKADNGNLKQFTINVTANGTITGFTAVEQDGQRSTYQLKSQKNGPVDDAKFHFTLPKGVTLDDQRQ</sequence>
<gene>
    <name evidence="1" type="primary">lolA</name>
    <name type="ordered locus">SG1109</name>
</gene>
<protein>
    <recommendedName>
        <fullName evidence="1">Outer-membrane lipoprotein carrier protein</fullName>
    </recommendedName>
</protein>
<feature type="signal peptide" evidence="1">
    <location>
        <begin position="1"/>
        <end position="21"/>
    </location>
</feature>
<feature type="chain" id="PRO_1000005707" description="Outer-membrane lipoprotein carrier protein">
    <location>
        <begin position="22"/>
        <end position="203"/>
    </location>
</feature>
<proteinExistence type="inferred from homology"/>
<keyword id="KW-0143">Chaperone</keyword>
<keyword id="KW-0574">Periplasm</keyword>
<keyword id="KW-0653">Protein transport</keyword>
<keyword id="KW-0732">Signal</keyword>
<keyword id="KW-0813">Transport</keyword>
<name>LOLA_SODGM</name>